<dbReference type="EC" id="7.1.2.2" evidence="1"/>
<dbReference type="EMBL" id="CP000478">
    <property type="protein sequence ID" value="ABK18260.1"/>
    <property type="molecule type" value="Genomic_DNA"/>
</dbReference>
<dbReference type="RefSeq" id="WP_011699428.1">
    <property type="nucleotide sequence ID" value="NC_008554.1"/>
</dbReference>
<dbReference type="SMR" id="A0LLF8"/>
<dbReference type="FunCoup" id="A0LLF8">
    <property type="interactions" value="436"/>
</dbReference>
<dbReference type="STRING" id="335543.Sfum_2582"/>
<dbReference type="KEGG" id="sfu:Sfum_2582"/>
<dbReference type="eggNOG" id="COG0055">
    <property type="taxonomic scope" value="Bacteria"/>
</dbReference>
<dbReference type="HOGENOM" id="CLU_022398_0_2_7"/>
<dbReference type="InParanoid" id="A0LLF8"/>
<dbReference type="OrthoDB" id="9801639at2"/>
<dbReference type="Proteomes" id="UP000001784">
    <property type="component" value="Chromosome"/>
</dbReference>
<dbReference type="GO" id="GO:0005886">
    <property type="term" value="C:plasma membrane"/>
    <property type="evidence" value="ECO:0007669"/>
    <property type="project" value="UniProtKB-SubCell"/>
</dbReference>
<dbReference type="GO" id="GO:0045259">
    <property type="term" value="C:proton-transporting ATP synthase complex"/>
    <property type="evidence" value="ECO:0007669"/>
    <property type="project" value="UniProtKB-KW"/>
</dbReference>
<dbReference type="GO" id="GO:0005524">
    <property type="term" value="F:ATP binding"/>
    <property type="evidence" value="ECO:0007669"/>
    <property type="project" value="UniProtKB-UniRule"/>
</dbReference>
<dbReference type="GO" id="GO:0016887">
    <property type="term" value="F:ATP hydrolysis activity"/>
    <property type="evidence" value="ECO:0007669"/>
    <property type="project" value="InterPro"/>
</dbReference>
<dbReference type="GO" id="GO:0046933">
    <property type="term" value="F:proton-transporting ATP synthase activity, rotational mechanism"/>
    <property type="evidence" value="ECO:0007669"/>
    <property type="project" value="UniProtKB-UniRule"/>
</dbReference>
<dbReference type="CDD" id="cd18110">
    <property type="entry name" value="ATP-synt_F1_beta_C"/>
    <property type="match status" value="1"/>
</dbReference>
<dbReference type="CDD" id="cd18115">
    <property type="entry name" value="ATP-synt_F1_beta_N"/>
    <property type="match status" value="1"/>
</dbReference>
<dbReference type="CDD" id="cd01133">
    <property type="entry name" value="F1-ATPase_beta_CD"/>
    <property type="match status" value="1"/>
</dbReference>
<dbReference type="FunFam" id="1.10.1140.10:FF:000001">
    <property type="entry name" value="ATP synthase subunit beta"/>
    <property type="match status" value="1"/>
</dbReference>
<dbReference type="FunFam" id="2.40.10.170:FF:000005">
    <property type="entry name" value="ATP synthase subunit beta"/>
    <property type="match status" value="1"/>
</dbReference>
<dbReference type="FunFam" id="3.40.50.300:FF:000004">
    <property type="entry name" value="ATP synthase subunit beta"/>
    <property type="match status" value="1"/>
</dbReference>
<dbReference type="Gene3D" id="2.40.10.170">
    <property type="match status" value="1"/>
</dbReference>
<dbReference type="Gene3D" id="1.10.1140.10">
    <property type="entry name" value="Bovine Mitochondrial F1-atpase, Atp Synthase Beta Chain, Chain D, domain 3"/>
    <property type="match status" value="1"/>
</dbReference>
<dbReference type="Gene3D" id="3.40.50.300">
    <property type="entry name" value="P-loop containing nucleotide triphosphate hydrolases"/>
    <property type="match status" value="1"/>
</dbReference>
<dbReference type="HAMAP" id="MF_01347">
    <property type="entry name" value="ATP_synth_beta_bact"/>
    <property type="match status" value="1"/>
</dbReference>
<dbReference type="InterPro" id="IPR003593">
    <property type="entry name" value="AAA+_ATPase"/>
</dbReference>
<dbReference type="InterPro" id="IPR055190">
    <property type="entry name" value="ATP-synt_VA_C"/>
</dbReference>
<dbReference type="InterPro" id="IPR005722">
    <property type="entry name" value="ATP_synth_F1_bsu"/>
</dbReference>
<dbReference type="InterPro" id="IPR020003">
    <property type="entry name" value="ATPase_a/bsu_AS"/>
</dbReference>
<dbReference type="InterPro" id="IPR050053">
    <property type="entry name" value="ATPase_alpha/beta_chains"/>
</dbReference>
<dbReference type="InterPro" id="IPR004100">
    <property type="entry name" value="ATPase_F1/V1/A1_a/bsu_N"/>
</dbReference>
<dbReference type="InterPro" id="IPR036121">
    <property type="entry name" value="ATPase_F1/V1/A1_a/bsu_N_sf"/>
</dbReference>
<dbReference type="InterPro" id="IPR000194">
    <property type="entry name" value="ATPase_F1/V1/A1_a/bsu_nucl-bd"/>
</dbReference>
<dbReference type="InterPro" id="IPR024034">
    <property type="entry name" value="ATPase_F1/V1_b/a_C"/>
</dbReference>
<dbReference type="InterPro" id="IPR027417">
    <property type="entry name" value="P-loop_NTPase"/>
</dbReference>
<dbReference type="NCBIfam" id="TIGR01039">
    <property type="entry name" value="atpD"/>
    <property type="match status" value="1"/>
</dbReference>
<dbReference type="PANTHER" id="PTHR15184">
    <property type="entry name" value="ATP SYNTHASE"/>
    <property type="match status" value="1"/>
</dbReference>
<dbReference type="PANTHER" id="PTHR15184:SF71">
    <property type="entry name" value="ATP SYNTHASE SUBUNIT BETA, MITOCHONDRIAL"/>
    <property type="match status" value="1"/>
</dbReference>
<dbReference type="Pfam" id="PF00006">
    <property type="entry name" value="ATP-synt_ab"/>
    <property type="match status" value="1"/>
</dbReference>
<dbReference type="Pfam" id="PF02874">
    <property type="entry name" value="ATP-synt_ab_N"/>
    <property type="match status" value="1"/>
</dbReference>
<dbReference type="Pfam" id="PF22919">
    <property type="entry name" value="ATP-synt_VA_C"/>
    <property type="match status" value="1"/>
</dbReference>
<dbReference type="SMART" id="SM00382">
    <property type="entry name" value="AAA"/>
    <property type="match status" value="1"/>
</dbReference>
<dbReference type="SUPFAM" id="SSF47917">
    <property type="entry name" value="C-terminal domain of alpha and beta subunits of F1 ATP synthase"/>
    <property type="match status" value="1"/>
</dbReference>
<dbReference type="SUPFAM" id="SSF50615">
    <property type="entry name" value="N-terminal domain of alpha and beta subunits of F1 ATP synthase"/>
    <property type="match status" value="1"/>
</dbReference>
<dbReference type="SUPFAM" id="SSF52540">
    <property type="entry name" value="P-loop containing nucleoside triphosphate hydrolases"/>
    <property type="match status" value="1"/>
</dbReference>
<dbReference type="PROSITE" id="PS00152">
    <property type="entry name" value="ATPASE_ALPHA_BETA"/>
    <property type="match status" value="1"/>
</dbReference>
<organism>
    <name type="scientific">Syntrophobacter fumaroxidans (strain DSM 10017 / MPOB)</name>
    <dbReference type="NCBI Taxonomy" id="335543"/>
    <lineage>
        <taxon>Bacteria</taxon>
        <taxon>Pseudomonadati</taxon>
        <taxon>Thermodesulfobacteriota</taxon>
        <taxon>Syntrophobacteria</taxon>
        <taxon>Syntrophobacterales</taxon>
        <taxon>Syntrophobacteraceae</taxon>
        <taxon>Syntrophobacter</taxon>
    </lineage>
</organism>
<feature type="chain" id="PRO_1000055173" description="ATP synthase subunit beta">
    <location>
        <begin position="1"/>
        <end position="469"/>
    </location>
</feature>
<feature type="binding site" evidence="1">
    <location>
        <begin position="155"/>
        <end position="162"/>
    </location>
    <ligand>
        <name>ATP</name>
        <dbReference type="ChEBI" id="CHEBI:30616"/>
    </ligand>
</feature>
<sequence>MNLGKIVQVIGNVVDVEFGEGKLPPLLTALFVSNPGLNDQEDNLVLEVAQHLGDNVVRTIGMDLTDGLVRGMPVKDTGNPIMMPVGAAVLGRVINVVGRTVDGLGPVNTDTYMPIHRTAPAFTEQDTSVKVLETGVKVIDLLVPFPRGGKMGMFGGAGVGKTVVMMEMIHNIAMQHGGISVFAGVGERTREGNDLYHEMKDSGVLPRAGLVYGQMTEPPGARARVALSALTVAEYFRDVEGQDVLLFVDNIFRFTQAGAEVSALLGRMPSAVGYQPTLGTDLGELQERITSTTKGSITSVQCVYVPADDLTDPAPATTFAHLDGTVVLSRQIAELGIYPAVDPLDSTSRILDPNVLGEDHYYTAREVQQILQKYKDLQDIIAILGMDELSDEDKLTVARARKIQRFLSQPFHVAETFTGVAGKYVKVEDTVRGFKEICEGKHDDIPEQAFFMAGGIEEVLEKAKQMSAA</sequence>
<protein>
    <recommendedName>
        <fullName evidence="1">ATP synthase subunit beta</fullName>
        <ecNumber evidence="1">7.1.2.2</ecNumber>
    </recommendedName>
    <alternativeName>
        <fullName evidence="1">ATP synthase F1 sector subunit beta</fullName>
    </alternativeName>
    <alternativeName>
        <fullName evidence="1">F-ATPase subunit beta</fullName>
    </alternativeName>
</protein>
<keyword id="KW-0066">ATP synthesis</keyword>
<keyword id="KW-0067">ATP-binding</keyword>
<keyword id="KW-0997">Cell inner membrane</keyword>
<keyword id="KW-1003">Cell membrane</keyword>
<keyword id="KW-0139">CF(1)</keyword>
<keyword id="KW-0375">Hydrogen ion transport</keyword>
<keyword id="KW-0406">Ion transport</keyword>
<keyword id="KW-0472">Membrane</keyword>
<keyword id="KW-0547">Nucleotide-binding</keyword>
<keyword id="KW-1185">Reference proteome</keyword>
<keyword id="KW-1278">Translocase</keyword>
<keyword id="KW-0813">Transport</keyword>
<evidence type="ECO:0000255" key="1">
    <source>
        <dbReference type="HAMAP-Rule" id="MF_01347"/>
    </source>
</evidence>
<reference key="1">
    <citation type="submission" date="2006-10" db="EMBL/GenBank/DDBJ databases">
        <title>Complete sequence of Syntrophobacter fumaroxidans MPOB.</title>
        <authorList>
            <consortium name="US DOE Joint Genome Institute"/>
            <person name="Copeland A."/>
            <person name="Lucas S."/>
            <person name="Lapidus A."/>
            <person name="Barry K."/>
            <person name="Detter J.C."/>
            <person name="Glavina del Rio T."/>
            <person name="Hammon N."/>
            <person name="Israni S."/>
            <person name="Pitluck S."/>
            <person name="Goltsman E.G."/>
            <person name="Martinez M."/>
            <person name="Schmutz J."/>
            <person name="Larimer F."/>
            <person name="Land M."/>
            <person name="Hauser L."/>
            <person name="Kyrpides N."/>
            <person name="Kim E."/>
            <person name="Boone D.R."/>
            <person name="Brockman F."/>
            <person name="Culley D."/>
            <person name="Ferry J."/>
            <person name="Gunsalus R."/>
            <person name="McInerney M.J."/>
            <person name="Morrison M."/>
            <person name="Plugge C."/>
            <person name="Rohlin L."/>
            <person name="Scholten J."/>
            <person name="Sieber J."/>
            <person name="Stams A.J.M."/>
            <person name="Worm P."/>
            <person name="Henstra A.M."/>
            <person name="Richardson P."/>
        </authorList>
    </citation>
    <scope>NUCLEOTIDE SEQUENCE [LARGE SCALE GENOMIC DNA]</scope>
    <source>
        <strain>DSM 10017 / MPOB</strain>
    </source>
</reference>
<proteinExistence type="inferred from homology"/>
<name>ATPB_SYNFM</name>
<accession>A0LLF8</accession>
<gene>
    <name evidence="1" type="primary">atpD</name>
    <name type="ordered locus">Sfum_2582</name>
</gene>
<comment type="function">
    <text evidence="1">Produces ATP from ADP in the presence of a proton gradient across the membrane. The catalytic sites are hosted primarily by the beta subunits.</text>
</comment>
<comment type="catalytic activity">
    <reaction evidence="1">
        <text>ATP + H2O + 4 H(+)(in) = ADP + phosphate + 5 H(+)(out)</text>
        <dbReference type="Rhea" id="RHEA:57720"/>
        <dbReference type="ChEBI" id="CHEBI:15377"/>
        <dbReference type="ChEBI" id="CHEBI:15378"/>
        <dbReference type="ChEBI" id="CHEBI:30616"/>
        <dbReference type="ChEBI" id="CHEBI:43474"/>
        <dbReference type="ChEBI" id="CHEBI:456216"/>
        <dbReference type="EC" id="7.1.2.2"/>
    </reaction>
</comment>
<comment type="subunit">
    <text evidence="1">F-type ATPases have 2 components, CF(1) - the catalytic core - and CF(0) - the membrane proton channel. CF(1) has five subunits: alpha(3), beta(3), gamma(1), delta(1), epsilon(1). CF(0) has three main subunits: a(1), b(2) and c(9-12). The alpha and beta chains form an alternating ring which encloses part of the gamma chain. CF(1) is attached to CF(0) by a central stalk formed by the gamma and epsilon chains, while a peripheral stalk is formed by the delta and b chains.</text>
</comment>
<comment type="subcellular location">
    <subcellularLocation>
        <location evidence="1">Cell inner membrane</location>
        <topology evidence="1">Peripheral membrane protein</topology>
    </subcellularLocation>
</comment>
<comment type="similarity">
    <text evidence="1">Belongs to the ATPase alpha/beta chains family.</text>
</comment>